<comment type="function">
    <text evidence="1">Component of the A-type ATP synthase that produces ATP from ADP in the presence of a proton gradient across the membrane. The B chain is a regulatory subunit.</text>
</comment>
<comment type="subunit">
    <text evidence="1">Has multiple subunits with at least A(3), B(3), C, D, E, F, H, I and proteolipid K(x).</text>
</comment>
<comment type="subcellular location">
    <subcellularLocation>
        <location evidence="1">Cell membrane</location>
        <topology evidence="1">Peripheral membrane protein</topology>
    </subcellularLocation>
</comment>
<comment type="similarity">
    <text evidence="1">Belongs to the ATPase alpha/beta chains family.</text>
</comment>
<name>AATB2_METHJ</name>
<organism>
    <name type="scientific">Methanospirillum hungatei JF-1 (strain ATCC 27890 / DSM 864 / NBRC 100397 / JF-1)</name>
    <dbReference type="NCBI Taxonomy" id="323259"/>
    <lineage>
        <taxon>Archaea</taxon>
        <taxon>Methanobacteriati</taxon>
        <taxon>Methanobacteriota</taxon>
        <taxon>Stenosarchaea group</taxon>
        <taxon>Methanomicrobia</taxon>
        <taxon>Methanomicrobiales</taxon>
        <taxon>Methanospirillaceae</taxon>
        <taxon>Methanospirillum</taxon>
    </lineage>
</organism>
<protein>
    <recommendedName>
        <fullName evidence="1">A-type ATP synthase subunit B 2</fullName>
    </recommendedName>
</protein>
<keyword id="KW-0066">ATP synthesis</keyword>
<keyword id="KW-1003">Cell membrane</keyword>
<keyword id="KW-0375">Hydrogen ion transport</keyword>
<keyword id="KW-0406">Ion transport</keyword>
<keyword id="KW-0472">Membrane</keyword>
<keyword id="KW-1185">Reference proteome</keyword>
<keyword id="KW-0813">Transport</keyword>
<evidence type="ECO:0000255" key="1">
    <source>
        <dbReference type="HAMAP-Rule" id="MF_00310"/>
    </source>
</evidence>
<sequence>MQHGSLITVEYQTVNYVSGPLIFVERPKEISFGETAQIILPDGEARTGQILDISEDIAVVQVFEGTRGIDSHVTTVRFTGQSPLLDVSYDMLGRVLDGVGRPRDGGPEIIPEARLDIAGMPINPYSRDKPAEFIQTGISAIDALNTLVRGQKLPIFSGAGLPANQLAAQIAKQAKVLGEGENFAVVFAAMGITYKEASFFMKEFEESGALERVVFFLNLADDPTIERIATPRCALTAAEFLAYTHNLHVLVILTDMTNYCDALREISTAREEIPGRRGYPGYMYTDLATIYERAGRIKGCTGSITQIPILTMPDDDITHPVPDLTGYITEGQIVLSRDLFRKGINPPIDALPCLSRLMNLGIGPGKTREDHRNVADQLYASYAYGRDLRRLVAIVGEEALSELDRNYLKFADHFEKRFISQGNVERSIETTLQVAWELFSLLPDEELKRIKEEYIDKYRTLIISGG</sequence>
<gene>
    <name evidence="1" type="primary">atpB2</name>
    <name type="ordered locus">Mhun_1758</name>
</gene>
<dbReference type="EMBL" id="CP000254">
    <property type="protein sequence ID" value="ABD41479.1"/>
    <property type="molecule type" value="Genomic_DNA"/>
</dbReference>
<dbReference type="RefSeq" id="WP_011448743.1">
    <property type="nucleotide sequence ID" value="NC_007796.1"/>
</dbReference>
<dbReference type="SMR" id="Q2FL44"/>
<dbReference type="STRING" id="323259.Mhun_1758"/>
<dbReference type="EnsemblBacteria" id="ABD41479">
    <property type="protein sequence ID" value="ABD41479"/>
    <property type="gene ID" value="Mhun_1758"/>
</dbReference>
<dbReference type="GeneID" id="3924708"/>
<dbReference type="KEGG" id="mhu:Mhun_1758"/>
<dbReference type="eggNOG" id="arCOG00865">
    <property type="taxonomic scope" value="Archaea"/>
</dbReference>
<dbReference type="HOGENOM" id="CLU_022916_0_0_2"/>
<dbReference type="InParanoid" id="Q2FL44"/>
<dbReference type="OrthoDB" id="32941at2157"/>
<dbReference type="Proteomes" id="UP000001941">
    <property type="component" value="Chromosome"/>
</dbReference>
<dbReference type="GO" id="GO:0005886">
    <property type="term" value="C:plasma membrane"/>
    <property type="evidence" value="ECO:0007669"/>
    <property type="project" value="UniProtKB-SubCell"/>
</dbReference>
<dbReference type="GO" id="GO:0005524">
    <property type="term" value="F:ATP binding"/>
    <property type="evidence" value="ECO:0007669"/>
    <property type="project" value="UniProtKB-UniRule"/>
</dbReference>
<dbReference type="GO" id="GO:0046933">
    <property type="term" value="F:proton-transporting ATP synthase activity, rotational mechanism"/>
    <property type="evidence" value="ECO:0007669"/>
    <property type="project" value="UniProtKB-UniRule"/>
</dbReference>
<dbReference type="GO" id="GO:0042777">
    <property type="term" value="P:proton motive force-driven plasma membrane ATP synthesis"/>
    <property type="evidence" value="ECO:0007669"/>
    <property type="project" value="UniProtKB-UniRule"/>
</dbReference>
<dbReference type="CDD" id="cd18112">
    <property type="entry name" value="ATP-synt_V_A-type_beta_C"/>
    <property type="match status" value="1"/>
</dbReference>
<dbReference type="CDD" id="cd18118">
    <property type="entry name" value="ATP-synt_V_A-type_beta_N"/>
    <property type="match status" value="1"/>
</dbReference>
<dbReference type="CDD" id="cd01135">
    <property type="entry name" value="V_A-ATPase_B"/>
    <property type="match status" value="1"/>
</dbReference>
<dbReference type="Gene3D" id="3.40.50.12240">
    <property type="match status" value="1"/>
</dbReference>
<dbReference type="HAMAP" id="MF_00310">
    <property type="entry name" value="ATP_synth_B_arch"/>
    <property type="match status" value="1"/>
</dbReference>
<dbReference type="InterPro" id="IPR055190">
    <property type="entry name" value="ATP-synt_VA_C"/>
</dbReference>
<dbReference type="InterPro" id="IPR004100">
    <property type="entry name" value="ATPase_F1/V1/A1_a/bsu_N"/>
</dbReference>
<dbReference type="InterPro" id="IPR000194">
    <property type="entry name" value="ATPase_F1/V1/A1_a/bsu_nucl-bd"/>
</dbReference>
<dbReference type="InterPro" id="IPR027417">
    <property type="entry name" value="P-loop_NTPase"/>
</dbReference>
<dbReference type="InterPro" id="IPR022879">
    <property type="entry name" value="V-ATPase_su_B/beta"/>
</dbReference>
<dbReference type="NCBIfam" id="NF003235">
    <property type="entry name" value="PRK04196.1"/>
    <property type="match status" value="1"/>
</dbReference>
<dbReference type="PANTHER" id="PTHR43389">
    <property type="entry name" value="V-TYPE PROTON ATPASE SUBUNIT B"/>
    <property type="match status" value="1"/>
</dbReference>
<dbReference type="PANTHER" id="PTHR43389:SF4">
    <property type="entry name" value="V-TYPE PROTON ATPASE SUBUNIT B"/>
    <property type="match status" value="1"/>
</dbReference>
<dbReference type="Pfam" id="PF00006">
    <property type="entry name" value="ATP-synt_ab"/>
    <property type="match status" value="1"/>
</dbReference>
<dbReference type="Pfam" id="PF02874">
    <property type="entry name" value="ATP-synt_ab_N"/>
    <property type="match status" value="1"/>
</dbReference>
<dbReference type="Pfam" id="PF22919">
    <property type="entry name" value="ATP-synt_VA_C"/>
    <property type="match status" value="1"/>
</dbReference>
<dbReference type="PIRSF" id="PIRSF039114">
    <property type="entry name" value="V-ATPsynth_beta/V-ATPase_B"/>
    <property type="match status" value="1"/>
</dbReference>
<dbReference type="SUPFAM" id="SSF47917">
    <property type="entry name" value="C-terminal domain of alpha and beta subunits of F1 ATP synthase"/>
    <property type="match status" value="1"/>
</dbReference>
<dbReference type="SUPFAM" id="SSF52540">
    <property type="entry name" value="P-loop containing nucleoside triphosphate hydrolases"/>
    <property type="match status" value="1"/>
</dbReference>
<proteinExistence type="inferred from homology"/>
<reference key="1">
    <citation type="journal article" date="2016" name="Stand. Genomic Sci.">
        <title>Complete genome sequence of Methanospirillum hungatei type strain JF1.</title>
        <authorList>
            <person name="Gunsalus R.P."/>
            <person name="Cook L.E."/>
            <person name="Crable B."/>
            <person name="Rohlin L."/>
            <person name="McDonald E."/>
            <person name="Mouttaki H."/>
            <person name="Sieber J.R."/>
            <person name="Poweleit N."/>
            <person name="Zhou H."/>
            <person name="Lapidus A.L."/>
            <person name="Daligault H.E."/>
            <person name="Land M."/>
            <person name="Gilna P."/>
            <person name="Ivanova N."/>
            <person name="Kyrpides N."/>
            <person name="Culley D.E."/>
            <person name="McInerney M.J."/>
        </authorList>
    </citation>
    <scope>NUCLEOTIDE SEQUENCE [LARGE SCALE GENOMIC DNA]</scope>
    <source>
        <strain>ATCC 27890 / DSM 864 / NBRC 100397 / JF-1</strain>
    </source>
</reference>
<accession>Q2FL44</accession>
<feature type="chain" id="PRO_0000322504" description="A-type ATP synthase subunit B 2">
    <location>
        <begin position="1"/>
        <end position="466"/>
    </location>
</feature>